<evidence type="ECO:0000250" key="1"/>
<evidence type="ECO:0000250" key="2">
    <source>
        <dbReference type="UniProtKB" id="P19938"/>
    </source>
</evidence>
<evidence type="ECO:0000305" key="3"/>
<protein>
    <recommendedName>
        <fullName>D-alanine aminotransferase</fullName>
        <ecNumber>2.6.1.21</ecNumber>
    </recommendedName>
    <alternativeName>
        <fullName>D-amino acid aminotransferase</fullName>
    </alternativeName>
    <alternativeName>
        <fullName>D-amino acid transaminase</fullName>
        <shortName>DAAT</shortName>
    </alternativeName>
    <alternativeName>
        <fullName>D-aspartate aminotransferase</fullName>
    </alternativeName>
</protein>
<dbReference type="EC" id="2.6.1.21"/>
<dbReference type="EMBL" id="BX571857">
    <property type="protein sequence ID" value="CAG43479.1"/>
    <property type="molecule type" value="Genomic_DNA"/>
</dbReference>
<dbReference type="RefSeq" id="WP_000411092.1">
    <property type="nucleotide sequence ID" value="NC_002953.3"/>
</dbReference>
<dbReference type="SMR" id="Q6G8H7"/>
<dbReference type="KEGG" id="sas:SAS1676"/>
<dbReference type="HOGENOM" id="CLU_020844_4_1_9"/>
<dbReference type="GO" id="GO:0005829">
    <property type="term" value="C:cytosol"/>
    <property type="evidence" value="ECO:0007669"/>
    <property type="project" value="TreeGrafter"/>
</dbReference>
<dbReference type="GO" id="GO:0047810">
    <property type="term" value="F:D-alanine-2-oxoglutarate aminotransferase activity"/>
    <property type="evidence" value="ECO:0000250"/>
    <property type="project" value="UniProtKB"/>
</dbReference>
<dbReference type="GO" id="GO:0030170">
    <property type="term" value="F:pyridoxal phosphate binding"/>
    <property type="evidence" value="ECO:0000250"/>
    <property type="project" value="UniProtKB"/>
</dbReference>
<dbReference type="GO" id="GO:0046437">
    <property type="term" value="P:D-amino acid biosynthetic process"/>
    <property type="evidence" value="ECO:0000250"/>
    <property type="project" value="UniProtKB"/>
</dbReference>
<dbReference type="GO" id="GO:0019478">
    <property type="term" value="P:D-amino acid catabolic process"/>
    <property type="evidence" value="ECO:0000250"/>
    <property type="project" value="UniProtKB"/>
</dbReference>
<dbReference type="CDD" id="cd01558">
    <property type="entry name" value="D-AAT_like"/>
    <property type="match status" value="1"/>
</dbReference>
<dbReference type="FunFam" id="3.20.10.10:FF:000002">
    <property type="entry name" value="D-alanine aminotransferase"/>
    <property type="match status" value="1"/>
</dbReference>
<dbReference type="FunFam" id="3.30.470.10:FF:000009">
    <property type="entry name" value="D-alanine aminotransferase"/>
    <property type="match status" value="1"/>
</dbReference>
<dbReference type="Gene3D" id="3.30.470.10">
    <property type="match status" value="1"/>
</dbReference>
<dbReference type="Gene3D" id="3.20.10.10">
    <property type="entry name" value="D-amino Acid Aminotransferase, subunit A, domain 2"/>
    <property type="match status" value="1"/>
</dbReference>
<dbReference type="InterPro" id="IPR001544">
    <property type="entry name" value="Aminotrans_IV"/>
</dbReference>
<dbReference type="InterPro" id="IPR018300">
    <property type="entry name" value="Aminotrans_IV_CS"/>
</dbReference>
<dbReference type="InterPro" id="IPR036038">
    <property type="entry name" value="Aminotransferase-like"/>
</dbReference>
<dbReference type="InterPro" id="IPR043132">
    <property type="entry name" value="BCAT-like_C"/>
</dbReference>
<dbReference type="InterPro" id="IPR043131">
    <property type="entry name" value="BCAT-like_N"/>
</dbReference>
<dbReference type="InterPro" id="IPR050571">
    <property type="entry name" value="Class-IV_PLP-Dep_Aminotrnsfr"/>
</dbReference>
<dbReference type="InterPro" id="IPR005784">
    <property type="entry name" value="D_amino_transT"/>
</dbReference>
<dbReference type="NCBIfam" id="TIGR01121">
    <property type="entry name" value="D_amino_aminoT"/>
    <property type="match status" value="1"/>
</dbReference>
<dbReference type="PANTHER" id="PTHR42743">
    <property type="entry name" value="AMINO-ACID AMINOTRANSFERASE"/>
    <property type="match status" value="1"/>
</dbReference>
<dbReference type="PANTHER" id="PTHR42743:SF10">
    <property type="entry name" value="D-ALANINE AMINOTRANSFERASE"/>
    <property type="match status" value="1"/>
</dbReference>
<dbReference type="Pfam" id="PF01063">
    <property type="entry name" value="Aminotran_4"/>
    <property type="match status" value="1"/>
</dbReference>
<dbReference type="SUPFAM" id="SSF56752">
    <property type="entry name" value="D-aminoacid aminotransferase-like PLP-dependent enzymes"/>
    <property type="match status" value="1"/>
</dbReference>
<dbReference type="PROSITE" id="PS00770">
    <property type="entry name" value="AA_TRANSFER_CLASS_4"/>
    <property type="match status" value="1"/>
</dbReference>
<gene>
    <name type="primary">dat</name>
    <name type="ordered locus">SAS1676</name>
</gene>
<keyword id="KW-0032">Aminotransferase</keyword>
<keyword id="KW-0663">Pyridoxal phosphate</keyword>
<keyword id="KW-0808">Transferase</keyword>
<accession>Q6G8H7</accession>
<comment type="function">
    <text evidence="1">Acts on the D-isomers of alanine, leucine, aspartate, glutamate, aminobutyrate, norvaline and asparagine. The enzyme transfers an amino group from a substrate D-amino acid to the pyridoxal phosphate cofactor to form pyridoxamine and an alpha-keto acid in the first half-reaction. The second half-reaction is the reverse of the first, transferring the amino group from the pyridoxamine to a second alpha-keto acid to form the product D-amino acid via a ping-pong mechanism. This is an important process in the formation of D-alanine and D-glutamate, which are essential bacterial cell wall components (By similarity).</text>
</comment>
<comment type="catalytic activity">
    <reaction>
        <text>D-alanine + 2-oxoglutarate = D-glutamate + pyruvate</text>
        <dbReference type="Rhea" id="RHEA:15869"/>
        <dbReference type="ChEBI" id="CHEBI:15361"/>
        <dbReference type="ChEBI" id="CHEBI:16810"/>
        <dbReference type="ChEBI" id="CHEBI:29986"/>
        <dbReference type="ChEBI" id="CHEBI:57416"/>
        <dbReference type="EC" id="2.6.1.21"/>
    </reaction>
</comment>
<comment type="cofactor">
    <cofactor evidence="1">
        <name>pyridoxal 5'-phosphate</name>
        <dbReference type="ChEBI" id="CHEBI:597326"/>
    </cofactor>
</comment>
<comment type="subunit">
    <text evidence="1">Homodimer.</text>
</comment>
<comment type="similarity">
    <text evidence="3">Belongs to the class-IV pyridoxal-phosphate-dependent aminotransferase family.</text>
</comment>
<feature type="chain" id="PRO_0000103257" description="D-alanine aminotransferase">
    <location>
        <begin position="1"/>
        <end position="282"/>
    </location>
</feature>
<feature type="active site" description="Proton acceptor" evidence="2">
    <location>
        <position position="146"/>
    </location>
</feature>
<feature type="binding site" evidence="2">
    <location>
        <position position="32"/>
    </location>
    <ligand>
        <name>substrate</name>
    </ligand>
</feature>
<feature type="binding site" evidence="2">
    <location>
        <position position="51"/>
    </location>
    <ligand>
        <name>pyridoxal 5'-phosphate</name>
        <dbReference type="ChEBI" id="CHEBI:597326"/>
    </ligand>
</feature>
<feature type="binding site" evidence="2">
    <location>
        <position position="99"/>
    </location>
    <ligand>
        <name>substrate</name>
    </ligand>
</feature>
<feature type="binding site" evidence="2">
    <location>
        <position position="101"/>
    </location>
    <ligand>
        <name>substrate</name>
    </ligand>
</feature>
<feature type="binding site" evidence="2">
    <location>
        <position position="178"/>
    </location>
    <ligand>
        <name>pyridoxal 5'-phosphate</name>
        <dbReference type="ChEBI" id="CHEBI:597326"/>
    </ligand>
</feature>
<feature type="modified residue" description="N6-(pyridoxal phosphate)lysine" evidence="2">
    <location>
        <position position="146"/>
    </location>
</feature>
<sequence length="282" mass="31950">MEKIFLNGEFVSPSEAKVSYNDRGYVFGDGIYEYIRVYNGKLFTVTEHYERFLRSANEIGLDLNYSVEELIELSRKLVDMNQIETGVIYIQATRGVAERNHSFPTPEVEPAIVAYTKSYDRPYDHLENGVNGVTVEDIRWLRCDIKSLNLLGNVLAKEYAVKYNAVEAIQHRGETVTEGSSSNAYAIKDGVIYTHPINNYILNGITRIVIKKIAEDYNIPFKEETFTVDFLRNADEVIVSSTSAEVTPVIKLDGEPVNDGKVGPITRQLQEGFEKYIESHSI</sequence>
<name>DAAA_STAAS</name>
<organism>
    <name type="scientific">Staphylococcus aureus (strain MSSA476)</name>
    <dbReference type="NCBI Taxonomy" id="282459"/>
    <lineage>
        <taxon>Bacteria</taxon>
        <taxon>Bacillati</taxon>
        <taxon>Bacillota</taxon>
        <taxon>Bacilli</taxon>
        <taxon>Bacillales</taxon>
        <taxon>Staphylococcaceae</taxon>
        <taxon>Staphylococcus</taxon>
    </lineage>
</organism>
<proteinExistence type="inferred from homology"/>
<reference key="1">
    <citation type="journal article" date="2004" name="Proc. Natl. Acad. Sci. U.S.A.">
        <title>Complete genomes of two clinical Staphylococcus aureus strains: evidence for the rapid evolution of virulence and drug resistance.</title>
        <authorList>
            <person name="Holden M.T.G."/>
            <person name="Feil E.J."/>
            <person name="Lindsay J.A."/>
            <person name="Peacock S.J."/>
            <person name="Day N.P.J."/>
            <person name="Enright M.C."/>
            <person name="Foster T.J."/>
            <person name="Moore C.E."/>
            <person name="Hurst L."/>
            <person name="Atkin R."/>
            <person name="Barron A."/>
            <person name="Bason N."/>
            <person name="Bentley S.D."/>
            <person name="Chillingworth C."/>
            <person name="Chillingworth T."/>
            <person name="Churcher C."/>
            <person name="Clark L."/>
            <person name="Corton C."/>
            <person name="Cronin A."/>
            <person name="Doggett J."/>
            <person name="Dowd L."/>
            <person name="Feltwell T."/>
            <person name="Hance Z."/>
            <person name="Harris B."/>
            <person name="Hauser H."/>
            <person name="Holroyd S."/>
            <person name="Jagels K."/>
            <person name="James K.D."/>
            <person name="Lennard N."/>
            <person name="Line A."/>
            <person name="Mayes R."/>
            <person name="Moule S."/>
            <person name="Mungall K."/>
            <person name="Ormond D."/>
            <person name="Quail M.A."/>
            <person name="Rabbinowitsch E."/>
            <person name="Rutherford K.M."/>
            <person name="Sanders M."/>
            <person name="Sharp S."/>
            <person name="Simmonds M."/>
            <person name="Stevens K."/>
            <person name="Whitehead S."/>
            <person name="Barrell B.G."/>
            <person name="Spratt B.G."/>
            <person name="Parkhill J."/>
        </authorList>
    </citation>
    <scope>NUCLEOTIDE SEQUENCE [LARGE SCALE GENOMIC DNA]</scope>
    <source>
        <strain>MSSA476</strain>
    </source>
</reference>